<proteinExistence type="inferred from homology"/>
<keyword id="KW-0066">ATP synthesis</keyword>
<keyword id="KW-0997">Cell inner membrane</keyword>
<keyword id="KW-1003">Cell membrane</keyword>
<keyword id="KW-0139">CF(1)</keyword>
<keyword id="KW-0375">Hydrogen ion transport</keyword>
<keyword id="KW-0406">Ion transport</keyword>
<keyword id="KW-0472">Membrane</keyword>
<keyword id="KW-0813">Transport</keyword>
<accession>A1U7H3</accession>
<reference key="1">
    <citation type="journal article" date="2011" name="Appl. Environ. Microbiol.">
        <title>Genomic potential of Marinobacter aquaeolei, a biogeochemical 'opportunitroph'.</title>
        <authorList>
            <person name="Singer E."/>
            <person name="Webb E.A."/>
            <person name="Nelson W.C."/>
            <person name="Heidelberg J.F."/>
            <person name="Ivanova N."/>
            <person name="Pati A."/>
            <person name="Edwards K.J."/>
        </authorList>
    </citation>
    <scope>NUCLEOTIDE SEQUENCE [LARGE SCALE GENOMIC DNA]</scope>
    <source>
        <strain>ATCC 700491 / DSM 11845 / VT8</strain>
    </source>
</reference>
<sequence length="140" mass="15069">MAMTVHCDVVSAEEKIYSGLVEMLIATGTEGELGIQYGHAPLLSELKPGAVRIIKQGGSEEILYVSGGYLEVQPNLVTLMADTAVRAKDVDEAAALEAQKQAEKALANKTGEFEYSRAAAELAEAAAQLRTIQKLRKHLR</sequence>
<feature type="chain" id="PRO_1000056502" description="ATP synthase epsilon chain">
    <location>
        <begin position="1"/>
        <end position="140"/>
    </location>
</feature>
<dbReference type="EMBL" id="CP000514">
    <property type="protein sequence ID" value="ABM20942.1"/>
    <property type="molecule type" value="Genomic_DNA"/>
</dbReference>
<dbReference type="RefSeq" id="WP_011787275.1">
    <property type="nucleotide sequence ID" value="NC_008740.1"/>
</dbReference>
<dbReference type="SMR" id="A1U7H3"/>
<dbReference type="STRING" id="351348.Maqu_3874"/>
<dbReference type="KEGG" id="maq:Maqu_3874"/>
<dbReference type="eggNOG" id="COG0355">
    <property type="taxonomic scope" value="Bacteria"/>
</dbReference>
<dbReference type="HOGENOM" id="CLU_084338_2_0_6"/>
<dbReference type="OrthoDB" id="9791445at2"/>
<dbReference type="Proteomes" id="UP000000998">
    <property type="component" value="Chromosome"/>
</dbReference>
<dbReference type="GO" id="GO:0005886">
    <property type="term" value="C:plasma membrane"/>
    <property type="evidence" value="ECO:0007669"/>
    <property type="project" value="UniProtKB-SubCell"/>
</dbReference>
<dbReference type="GO" id="GO:0045259">
    <property type="term" value="C:proton-transporting ATP synthase complex"/>
    <property type="evidence" value="ECO:0007669"/>
    <property type="project" value="UniProtKB-KW"/>
</dbReference>
<dbReference type="GO" id="GO:0005524">
    <property type="term" value="F:ATP binding"/>
    <property type="evidence" value="ECO:0007669"/>
    <property type="project" value="UniProtKB-UniRule"/>
</dbReference>
<dbReference type="GO" id="GO:0046933">
    <property type="term" value="F:proton-transporting ATP synthase activity, rotational mechanism"/>
    <property type="evidence" value="ECO:0007669"/>
    <property type="project" value="UniProtKB-UniRule"/>
</dbReference>
<dbReference type="CDD" id="cd12152">
    <property type="entry name" value="F1-ATPase_delta"/>
    <property type="match status" value="1"/>
</dbReference>
<dbReference type="FunFam" id="2.60.15.10:FF:000001">
    <property type="entry name" value="ATP synthase epsilon chain"/>
    <property type="match status" value="1"/>
</dbReference>
<dbReference type="Gene3D" id="1.20.5.440">
    <property type="entry name" value="ATP synthase delta/epsilon subunit, C-terminal domain"/>
    <property type="match status" value="1"/>
</dbReference>
<dbReference type="Gene3D" id="2.60.15.10">
    <property type="entry name" value="F0F1 ATP synthase delta/epsilon subunit, N-terminal"/>
    <property type="match status" value="1"/>
</dbReference>
<dbReference type="HAMAP" id="MF_00530">
    <property type="entry name" value="ATP_synth_epsil_bac"/>
    <property type="match status" value="1"/>
</dbReference>
<dbReference type="InterPro" id="IPR036794">
    <property type="entry name" value="ATP_F1_dsu/esu_C_sf"/>
</dbReference>
<dbReference type="InterPro" id="IPR001469">
    <property type="entry name" value="ATP_synth_F1_dsu/esu"/>
</dbReference>
<dbReference type="InterPro" id="IPR020546">
    <property type="entry name" value="ATP_synth_F1_dsu/esu_N"/>
</dbReference>
<dbReference type="InterPro" id="IPR020547">
    <property type="entry name" value="ATP_synth_F1_esu_C"/>
</dbReference>
<dbReference type="InterPro" id="IPR036771">
    <property type="entry name" value="ATPsynth_dsu/esu_N"/>
</dbReference>
<dbReference type="NCBIfam" id="TIGR01216">
    <property type="entry name" value="ATP_synt_epsi"/>
    <property type="match status" value="1"/>
</dbReference>
<dbReference type="NCBIfam" id="NF001847">
    <property type="entry name" value="PRK00571.1-4"/>
    <property type="match status" value="1"/>
</dbReference>
<dbReference type="PANTHER" id="PTHR13822">
    <property type="entry name" value="ATP SYNTHASE DELTA/EPSILON CHAIN"/>
    <property type="match status" value="1"/>
</dbReference>
<dbReference type="PANTHER" id="PTHR13822:SF10">
    <property type="entry name" value="ATP SYNTHASE EPSILON CHAIN, CHLOROPLASTIC"/>
    <property type="match status" value="1"/>
</dbReference>
<dbReference type="Pfam" id="PF00401">
    <property type="entry name" value="ATP-synt_DE"/>
    <property type="match status" value="1"/>
</dbReference>
<dbReference type="Pfam" id="PF02823">
    <property type="entry name" value="ATP-synt_DE_N"/>
    <property type="match status" value="1"/>
</dbReference>
<dbReference type="SUPFAM" id="SSF46604">
    <property type="entry name" value="Epsilon subunit of F1F0-ATP synthase C-terminal domain"/>
    <property type="match status" value="1"/>
</dbReference>
<dbReference type="SUPFAM" id="SSF51344">
    <property type="entry name" value="Epsilon subunit of F1F0-ATP synthase N-terminal domain"/>
    <property type="match status" value="1"/>
</dbReference>
<protein>
    <recommendedName>
        <fullName evidence="1">ATP synthase epsilon chain</fullName>
    </recommendedName>
    <alternativeName>
        <fullName evidence="1">ATP synthase F1 sector epsilon subunit</fullName>
    </alternativeName>
    <alternativeName>
        <fullName evidence="1">F-ATPase epsilon subunit</fullName>
    </alternativeName>
</protein>
<comment type="function">
    <text evidence="1">Produces ATP from ADP in the presence of a proton gradient across the membrane.</text>
</comment>
<comment type="subunit">
    <text evidence="1">F-type ATPases have 2 components, CF(1) - the catalytic core - and CF(0) - the membrane proton channel. CF(1) has five subunits: alpha(3), beta(3), gamma(1), delta(1), epsilon(1). CF(0) has three main subunits: a, b and c.</text>
</comment>
<comment type="subcellular location">
    <subcellularLocation>
        <location evidence="1">Cell inner membrane</location>
        <topology evidence="1">Peripheral membrane protein</topology>
    </subcellularLocation>
</comment>
<comment type="similarity">
    <text evidence="1">Belongs to the ATPase epsilon chain family.</text>
</comment>
<name>ATPE_MARN8</name>
<evidence type="ECO:0000255" key="1">
    <source>
        <dbReference type="HAMAP-Rule" id="MF_00530"/>
    </source>
</evidence>
<organism>
    <name type="scientific">Marinobacter nauticus (strain ATCC 700491 / DSM 11845 / VT8)</name>
    <name type="common">Marinobacter aquaeolei</name>
    <dbReference type="NCBI Taxonomy" id="351348"/>
    <lineage>
        <taxon>Bacteria</taxon>
        <taxon>Pseudomonadati</taxon>
        <taxon>Pseudomonadota</taxon>
        <taxon>Gammaproteobacteria</taxon>
        <taxon>Pseudomonadales</taxon>
        <taxon>Marinobacteraceae</taxon>
        <taxon>Marinobacter</taxon>
    </lineage>
</organism>
<gene>
    <name evidence="1" type="primary">atpC</name>
    <name type="ordered locus">Maqu_3874</name>
</gene>